<proteinExistence type="inferred from homology"/>
<gene>
    <name type="primary">timm50</name>
    <name type="ORF">DDB_G0270196</name>
</gene>
<feature type="transit peptide" description="Mitochondrion" evidence="2">
    <location>
        <begin position="1"/>
        <end position="48"/>
    </location>
</feature>
<feature type="chain" id="PRO_0000367257" description="Mitochondrial import inner membrane translocase subunit tim50">
    <location>
        <begin position="49"/>
        <end position="374"/>
    </location>
</feature>
<feature type="transmembrane region" description="Helical" evidence="2">
    <location>
        <begin position="103"/>
        <end position="125"/>
    </location>
</feature>
<feature type="domain" description="FCP1 homology">
    <location>
        <begin position="191"/>
        <end position="332"/>
    </location>
</feature>
<feature type="region of interest" description="Disordered" evidence="3">
    <location>
        <begin position="42"/>
        <end position="97"/>
    </location>
</feature>
<feature type="compositionally biased region" description="Basic and acidic residues" evidence="3">
    <location>
        <begin position="49"/>
        <end position="72"/>
    </location>
</feature>
<feature type="compositionally biased region" description="Basic and acidic residues" evidence="3">
    <location>
        <begin position="81"/>
        <end position="93"/>
    </location>
</feature>
<protein>
    <recommendedName>
        <fullName>Mitochondrial import inner membrane translocase subunit tim50</fullName>
    </recommendedName>
</protein>
<dbReference type="EMBL" id="AAFI02000005">
    <property type="protein sequence ID" value="EAL72448.1"/>
    <property type="molecule type" value="Genomic_DNA"/>
</dbReference>
<dbReference type="RefSeq" id="XP_646611.1">
    <property type="nucleotide sequence ID" value="XM_641519.1"/>
</dbReference>
<dbReference type="SMR" id="Q55C70"/>
<dbReference type="FunCoup" id="Q55C70">
    <property type="interactions" value="25"/>
</dbReference>
<dbReference type="STRING" id="44689.Q55C70"/>
<dbReference type="PaxDb" id="44689-DDB0304712"/>
<dbReference type="EnsemblProtists" id="EAL72448">
    <property type="protein sequence ID" value="EAL72448"/>
    <property type="gene ID" value="DDB_G0270196"/>
</dbReference>
<dbReference type="GeneID" id="8617583"/>
<dbReference type="KEGG" id="ddi:DDB_G0270196"/>
<dbReference type="dictyBase" id="DDB_G0270196"/>
<dbReference type="VEuPathDB" id="AmoebaDB:DDB_G0270196"/>
<dbReference type="eggNOG" id="KOG2832">
    <property type="taxonomic scope" value="Eukaryota"/>
</dbReference>
<dbReference type="HOGENOM" id="CLU_740641_0_0_1"/>
<dbReference type="InParanoid" id="Q55C70"/>
<dbReference type="OMA" id="YLAYEYK"/>
<dbReference type="PhylomeDB" id="Q55C70"/>
<dbReference type="PRO" id="PR:Q55C70"/>
<dbReference type="Proteomes" id="UP000002195">
    <property type="component" value="Chromosome 1"/>
</dbReference>
<dbReference type="GO" id="GO:0005744">
    <property type="term" value="C:TIM23 mitochondrial import inner membrane translocase complex"/>
    <property type="evidence" value="ECO:0000318"/>
    <property type="project" value="GO_Central"/>
</dbReference>
<dbReference type="GO" id="GO:0030150">
    <property type="term" value="P:protein import into mitochondrial matrix"/>
    <property type="evidence" value="ECO:0000318"/>
    <property type="project" value="GO_Central"/>
</dbReference>
<dbReference type="CDD" id="cd07521">
    <property type="entry name" value="HAD_FCP1-like"/>
    <property type="match status" value="1"/>
</dbReference>
<dbReference type="FunFam" id="3.40.50.1000:FF:000538">
    <property type="match status" value="1"/>
</dbReference>
<dbReference type="Gene3D" id="3.40.50.1000">
    <property type="entry name" value="HAD superfamily/HAD-like"/>
    <property type="match status" value="1"/>
</dbReference>
<dbReference type="InterPro" id="IPR004274">
    <property type="entry name" value="FCP1_dom"/>
</dbReference>
<dbReference type="InterPro" id="IPR036412">
    <property type="entry name" value="HAD-like_sf"/>
</dbReference>
<dbReference type="InterPro" id="IPR023214">
    <property type="entry name" value="HAD_sf"/>
</dbReference>
<dbReference type="InterPro" id="IPR050365">
    <property type="entry name" value="TIM50"/>
</dbReference>
<dbReference type="PANTHER" id="PTHR12210">
    <property type="entry name" value="DULLARD PROTEIN PHOSPHATASE"/>
    <property type="match status" value="1"/>
</dbReference>
<dbReference type="Pfam" id="PF03031">
    <property type="entry name" value="NIF"/>
    <property type="match status" value="1"/>
</dbReference>
<dbReference type="SMART" id="SM00577">
    <property type="entry name" value="CPDc"/>
    <property type="match status" value="1"/>
</dbReference>
<dbReference type="SUPFAM" id="SSF56784">
    <property type="entry name" value="HAD-like"/>
    <property type="match status" value="1"/>
</dbReference>
<name>TIM50_DICDI</name>
<sequence length="374" mass="43667">MILNKVAKCYGKQIGFFGNKTTQFIKPNQTIFLIGGTKRLFTTQQQQSPKKEEPKSEQQKKVEDKTEEKEKEKDEEENENEKEKENEDGEGQKKKSKFNVPPIVTSVTSTFFAGVLVASTFGYLTYNFKKDISEEERYRLNSVESKFYHSIAEPFREFFDNIFENLRTKYEFFDMLFGPGKIHKVLPPPLPGGKKYTLVIDIDALTEITKTSKYPTLYKRAGLDFFLDHLRKDYEIYLYFNGNIPQNKYEQLQFKIDTNGKYFTGLLYPETGIKERNQFSKKIEMLDRDPSKVIFIDAASPYDHPNVINIGKFKSNSKDKLLIELLPVLESFSRKNLDDVRPEISQFQNISKQSLTKNLEDYLSTHNINSRQKK</sequence>
<evidence type="ECO:0000250" key="1">
    <source>
        <dbReference type="UniProtKB" id="Q3ZCQ8"/>
    </source>
</evidence>
<evidence type="ECO:0000255" key="2"/>
<evidence type="ECO:0000256" key="3">
    <source>
        <dbReference type="SAM" id="MobiDB-lite"/>
    </source>
</evidence>
<evidence type="ECO:0000305" key="4"/>
<accession>Q55C70</accession>
<keyword id="KW-0472">Membrane</keyword>
<keyword id="KW-0496">Mitochondrion</keyword>
<keyword id="KW-0999">Mitochondrion inner membrane</keyword>
<keyword id="KW-0653">Protein transport</keyword>
<keyword id="KW-1185">Reference proteome</keyword>
<keyword id="KW-0809">Transit peptide</keyword>
<keyword id="KW-0811">Translocation</keyword>
<keyword id="KW-0812">Transmembrane</keyword>
<keyword id="KW-1133">Transmembrane helix</keyword>
<keyword id="KW-0813">Transport</keyword>
<organism>
    <name type="scientific">Dictyostelium discoideum</name>
    <name type="common">Social amoeba</name>
    <dbReference type="NCBI Taxonomy" id="44689"/>
    <lineage>
        <taxon>Eukaryota</taxon>
        <taxon>Amoebozoa</taxon>
        <taxon>Evosea</taxon>
        <taxon>Eumycetozoa</taxon>
        <taxon>Dictyostelia</taxon>
        <taxon>Dictyosteliales</taxon>
        <taxon>Dictyosteliaceae</taxon>
        <taxon>Dictyostelium</taxon>
    </lineage>
</organism>
<reference key="1">
    <citation type="journal article" date="2005" name="Nature">
        <title>The genome of the social amoeba Dictyostelium discoideum.</title>
        <authorList>
            <person name="Eichinger L."/>
            <person name="Pachebat J.A."/>
            <person name="Gloeckner G."/>
            <person name="Rajandream M.A."/>
            <person name="Sucgang R."/>
            <person name="Berriman M."/>
            <person name="Song J."/>
            <person name="Olsen R."/>
            <person name="Szafranski K."/>
            <person name="Xu Q."/>
            <person name="Tunggal B."/>
            <person name="Kummerfeld S."/>
            <person name="Madera M."/>
            <person name="Konfortov B.A."/>
            <person name="Rivero F."/>
            <person name="Bankier A.T."/>
            <person name="Lehmann R."/>
            <person name="Hamlin N."/>
            <person name="Davies R."/>
            <person name="Gaudet P."/>
            <person name="Fey P."/>
            <person name="Pilcher K."/>
            <person name="Chen G."/>
            <person name="Saunders D."/>
            <person name="Sodergren E.J."/>
            <person name="Davis P."/>
            <person name="Kerhornou A."/>
            <person name="Nie X."/>
            <person name="Hall N."/>
            <person name="Anjard C."/>
            <person name="Hemphill L."/>
            <person name="Bason N."/>
            <person name="Farbrother P."/>
            <person name="Desany B."/>
            <person name="Just E."/>
            <person name="Morio T."/>
            <person name="Rost R."/>
            <person name="Churcher C.M."/>
            <person name="Cooper J."/>
            <person name="Haydock S."/>
            <person name="van Driessche N."/>
            <person name="Cronin A."/>
            <person name="Goodhead I."/>
            <person name="Muzny D.M."/>
            <person name="Mourier T."/>
            <person name="Pain A."/>
            <person name="Lu M."/>
            <person name="Harper D."/>
            <person name="Lindsay R."/>
            <person name="Hauser H."/>
            <person name="James K.D."/>
            <person name="Quiles M."/>
            <person name="Madan Babu M."/>
            <person name="Saito T."/>
            <person name="Buchrieser C."/>
            <person name="Wardroper A."/>
            <person name="Felder M."/>
            <person name="Thangavelu M."/>
            <person name="Johnson D."/>
            <person name="Knights A."/>
            <person name="Loulseged H."/>
            <person name="Mungall K.L."/>
            <person name="Oliver K."/>
            <person name="Price C."/>
            <person name="Quail M.A."/>
            <person name="Urushihara H."/>
            <person name="Hernandez J."/>
            <person name="Rabbinowitsch E."/>
            <person name="Steffen D."/>
            <person name="Sanders M."/>
            <person name="Ma J."/>
            <person name="Kohara Y."/>
            <person name="Sharp S."/>
            <person name="Simmonds M.N."/>
            <person name="Spiegler S."/>
            <person name="Tivey A."/>
            <person name="Sugano S."/>
            <person name="White B."/>
            <person name="Walker D."/>
            <person name="Woodward J.R."/>
            <person name="Winckler T."/>
            <person name="Tanaka Y."/>
            <person name="Shaulsky G."/>
            <person name="Schleicher M."/>
            <person name="Weinstock G.M."/>
            <person name="Rosenthal A."/>
            <person name="Cox E.C."/>
            <person name="Chisholm R.L."/>
            <person name="Gibbs R.A."/>
            <person name="Loomis W.F."/>
            <person name="Platzer M."/>
            <person name="Kay R.R."/>
            <person name="Williams J.G."/>
            <person name="Dear P.H."/>
            <person name="Noegel A.A."/>
            <person name="Barrell B.G."/>
            <person name="Kuspa A."/>
        </authorList>
    </citation>
    <scope>NUCLEOTIDE SEQUENCE [LARGE SCALE GENOMIC DNA]</scope>
    <source>
        <strain>AX4</strain>
    </source>
</reference>
<comment type="function">
    <text evidence="1">Component of the mitochondrial import inner membrane translocase that mediates the translocation of transit peptide-containing proteins across the mitochondrial inner membrane.</text>
</comment>
<comment type="subunit">
    <text evidence="1">Component of the mitochondrial import inner membrane translocase complex.</text>
</comment>
<comment type="subcellular location">
    <subcellularLocation>
        <location evidence="1">Mitochondrion inner membrane</location>
        <topology evidence="1">Single-pass membrane protein</topology>
    </subcellularLocation>
</comment>
<comment type="similarity">
    <text evidence="4">Belongs to the TIM50 family.</text>
</comment>